<feature type="chain" id="PRO_0000252590" description="Gamma-glutamyl phosphate reductase">
    <location>
        <begin position="1"/>
        <end position="421"/>
    </location>
</feature>
<keyword id="KW-0028">Amino-acid biosynthesis</keyword>
<keyword id="KW-0963">Cytoplasm</keyword>
<keyword id="KW-0521">NADP</keyword>
<keyword id="KW-0560">Oxidoreductase</keyword>
<keyword id="KW-0641">Proline biosynthesis</keyword>
<keyword id="KW-1185">Reference proteome</keyword>
<protein>
    <recommendedName>
        <fullName evidence="1">Gamma-glutamyl phosphate reductase</fullName>
        <shortName evidence="1">GPR</shortName>
        <ecNumber evidence="1">1.2.1.41</ecNumber>
    </recommendedName>
    <alternativeName>
        <fullName evidence="1">Glutamate-5-semialdehyde dehydrogenase</fullName>
    </alternativeName>
    <alternativeName>
        <fullName evidence="1">Glutamyl-gamma-semialdehyde dehydrogenase</fullName>
        <shortName evidence="1">GSA dehydrogenase</shortName>
    </alternativeName>
</protein>
<evidence type="ECO:0000255" key="1">
    <source>
        <dbReference type="HAMAP-Rule" id="MF_00412"/>
    </source>
</evidence>
<gene>
    <name evidence="1" type="primary">proA</name>
    <name type="ordered locus">RD1_2658</name>
</gene>
<reference key="1">
    <citation type="journal article" date="2007" name="J. Bacteriol.">
        <title>The complete genome sequence of Roseobacter denitrificans reveals a mixotrophic rather than photosynthetic metabolism.</title>
        <authorList>
            <person name="Swingley W.D."/>
            <person name="Sadekar S."/>
            <person name="Mastrian S.D."/>
            <person name="Matthies H.J."/>
            <person name="Hao J."/>
            <person name="Ramos H."/>
            <person name="Acharya C.R."/>
            <person name="Conrad A.L."/>
            <person name="Taylor H.L."/>
            <person name="Dejesa L.C."/>
            <person name="Shah M.K."/>
            <person name="O'Huallachain M.E."/>
            <person name="Lince M.T."/>
            <person name="Blankenship R.E."/>
            <person name="Beatty J.T."/>
            <person name="Touchman J.W."/>
        </authorList>
    </citation>
    <scope>NUCLEOTIDE SEQUENCE [LARGE SCALE GENOMIC DNA]</scope>
    <source>
        <strain>ATCC 33942 / OCh 114</strain>
    </source>
</reference>
<proteinExistence type="inferred from homology"/>
<dbReference type="EC" id="1.2.1.41" evidence="1"/>
<dbReference type="EMBL" id="CP000362">
    <property type="protein sequence ID" value="ABG32205.1"/>
    <property type="molecule type" value="Genomic_DNA"/>
</dbReference>
<dbReference type="RefSeq" id="WP_011568822.1">
    <property type="nucleotide sequence ID" value="NC_008209.1"/>
</dbReference>
<dbReference type="SMR" id="Q165Y8"/>
<dbReference type="STRING" id="375451.RD1_2658"/>
<dbReference type="KEGG" id="rde:RD1_2658"/>
<dbReference type="eggNOG" id="COG0014">
    <property type="taxonomic scope" value="Bacteria"/>
</dbReference>
<dbReference type="HOGENOM" id="CLU_030231_0_0_5"/>
<dbReference type="OrthoDB" id="9809970at2"/>
<dbReference type="UniPathway" id="UPA00098">
    <property type="reaction ID" value="UER00360"/>
</dbReference>
<dbReference type="Proteomes" id="UP000007029">
    <property type="component" value="Chromosome"/>
</dbReference>
<dbReference type="GO" id="GO:0005737">
    <property type="term" value="C:cytoplasm"/>
    <property type="evidence" value="ECO:0007669"/>
    <property type="project" value="UniProtKB-SubCell"/>
</dbReference>
<dbReference type="GO" id="GO:0004350">
    <property type="term" value="F:glutamate-5-semialdehyde dehydrogenase activity"/>
    <property type="evidence" value="ECO:0007669"/>
    <property type="project" value="UniProtKB-UniRule"/>
</dbReference>
<dbReference type="GO" id="GO:0050661">
    <property type="term" value="F:NADP binding"/>
    <property type="evidence" value="ECO:0007669"/>
    <property type="project" value="InterPro"/>
</dbReference>
<dbReference type="GO" id="GO:0055129">
    <property type="term" value="P:L-proline biosynthetic process"/>
    <property type="evidence" value="ECO:0007669"/>
    <property type="project" value="UniProtKB-UniRule"/>
</dbReference>
<dbReference type="CDD" id="cd07079">
    <property type="entry name" value="ALDH_F18-19_ProA-GPR"/>
    <property type="match status" value="1"/>
</dbReference>
<dbReference type="FunFam" id="3.40.309.10:FF:000006">
    <property type="entry name" value="Gamma-glutamyl phosphate reductase"/>
    <property type="match status" value="1"/>
</dbReference>
<dbReference type="Gene3D" id="3.40.605.10">
    <property type="entry name" value="Aldehyde Dehydrogenase, Chain A, domain 1"/>
    <property type="match status" value="1"/>
</dbReference>
<dbReference type="Gene3D" id="3.40.309.10">
    <property type="entry name" value="Aldehyde Dehydrogenase, Chain A, domain 2"/>
    <property type="match status" value="1"/>
</dbReference>
<dbReference type="HAMAP" id="MF_00412">
    <property type="entry name" value="ProA"/>
    <property type="match status" value="1"/>
</dbReference>
<dbReference type="InterPro" id="IPR016161">
    <property type="entry name" value="Ald_DH/histidinol_DH"/>
</dbReference>
<dbReference type="InterPro" id="IPR016163">
    <property type="entry name" value="Ald_DH_C"/>
</dbReference>
<dbReference type="InterPro" id="IPR016162">
    <property type="entry name" value="Ald_DH_N"/>
</dbReference>
<dbReference type="InterPro" id="IPR015590">
    <property type="entry name" value="Aldehyde_DH_dom"/>
</dbReference>
<dbReference type="InterPro" id="IPR020593">
    <property type="entry name" value="G-glutamylP_reductase_CS"/>
</dbReference>
<dbReference type="InterPro" id="IPR012134">
    <property type="entry name" value="Glu-5-SA_DH"/>
</dbReference>
<dbReference type="InterPro" id="IPR000965">
    <property type="entry name" value="GPR_dom"/>
</dbReference>
<dbReference type="NCBIfam" id="NF001221">
    <property type="entry name" value="PRK00197.1"/>
    <property type="match status" value="1"/>
</dbReference>
<dbReference type="NCBIfam" id="TIGR00407">
    <property type="entry name" value="proA"/>
    <property type="match status" value="1"/>
</dbReference>
<dbReference type="PANTHER" id="PTHR11063:SF8">
    <property type="entry name" value="DELTA-1-PYRROLINE-5-CARBOXYLATE SYNTHASE"/>
    <property type="match status" value="1"/>
</dbReference>
<dbReference type="PANTHER" id="PTHR11063">
    <property type="entry name" value="GLUTAMATE SEMIALDEHYDE DEHYDROGENASE"/>
    <property type="match status" value="1"/>
</dbReference>
<dbReference type="Pfam" id="PF00171">
    <property type="entry name" value="Aldedh"/>
    <property type="match status" value="1"/>
</dbReference>
<dbReference type="PIRSF" id="PIRSF000151">
    <property type="entry name" value="GPR"/>
    <property type="match status" value="1"/>
</dbReference>
<dbReference type="SUPFAM" id="SSF53720">
    <property type="entry name" value="ALDH-like"/>
    <property type="match status" value="1"/>
</dbReference>
<dbReference type="PROSITE" id="PS01223">
    <property type="entry name" value="PROA"/>
    <property type="match status" value="1"/>
</dbReference>
<accession>Q165Y8</accession>
<name>PROA_ROSDO</name>
<comment type="function">
    <text evidence="1">Catalyzes the NADPH-dependent reduction of L-glutamate 5-phosphate into L-glutamate 5-semialdehyde and phosphate. The product spontaneously undergoes cyclization to form 1-pyrroline-5-carboxylate.</text>
</comment>
<comment type="catalytic activity">
    <reaction evidence="1">
        <text>L-glutamate 5-semialdehyde + phosphate + NADP(+) = L-glutamyl 5-phosphate + NADPH + H(+)</text>
        <dbReference type="Rhea" id="RHEA:19541"/>
        <dbReference type="ChEBI" id="CHEBI:15378"/>
        <dbReference type="ChEBI" id="CHEBI:43474"/>
        <dbReference type="ChEBI" id="CHEBI:57783"/>
        <dbReference type="ChEBI" id="CHEBI:58066"/>
        <dbReference type="ChEBI" id="CHEBI:58274"/>
        <dbReference type="ChEBI" id="CHEBI:58349"/>
        <dbReference type="EC" id="1.2.1.41"/>
    </reaction>
</comment>
<comment type="pathway">
    <text evidence="1">Amino-acid biosynthesis; L-proline biosynthesis; L-glutamate 5-semialdehyde from L-glutamate: step 2/2.</text>
</comment>
<comment type="subcellular location">
    <subcellularLocation>
        <location evidence="1">Cytoplasm</location>
    </subcellularLocation>
</comment>
<comment type="similarity">
    <text evidence="1">Belongs to the gamma-glutamyl phosphate reductase family.</text>
</comment>
<organism>
    <name type="scientific">Roseobacter denitrificans (strain ATCC 33942 / OCh 114)</name>
    <name type="common">Erythrobacter sp. (strain OCh 114)</name>
    <name type="synonym">Roseobacter denitrificans</name>
    <dbReference type="NCBI Taxonomy" id="375451"/>
    <lineage>
        <taxon>Bacteria</taxon>
        <taxon>Pseudomonadati</taxon>
        <taxon>Pseudomonadota</taxon>
        <taxon>Alphaproteobacteria</taxon>
        <taxon>Rhodobacterales</taxon>
        <taxon>Roseobacteraceae</taxon>
        <taxon>Roseobacter</taxon>
    </lineage>
</organism>
<sequence length="421" mass="44949">MKDMDSVSAMMSQIGQRAKEAAASLGFASVERKHAALISAAEHIWTQRAAILEANAKDIAYGRDKGLSDAMMDRLLLDEERLRGIVTSLRSVAEQADPVGEVIAAWDQPTGLHIERVRTPLGVIGVIYESRPNVTVDAGALCLKAGNAVILRGGSESFHSSKALHACLVQGLRDANLPEAAIQLVPTRDRAAVSEMLTMTDTIDVIVPRGGKGLVGLVQREARVPVFAHLEGIVHIYIDAAADAEKTLKVVMNAKTRRTGICGAAECLLIHKDVMPTLGADVIKELMRAGVEVRGDETLSAIQGVVKATADDWGREYLDMIVAARVVDDIDDAMAHIRTHGSNHTDCILTEDARAARRFMTELDSAIVMHNASTQFADGGEFGMGAEIGIATGKMHARGPVGAAQLTSFKYLVSGDGTTRA</sequence>